<accession>P50700</accession>
<accession>Q9T0D2</accession>
<dbReference type="EMBL" id="X89008">
    <property type="protein sequence ID" value="CAA61411.1"/>
    <property type="molecule type" value="mRNA"/>
</dbReference>
<dbReference type="EMBL" id="AL049500">
    <property type="protein sequence ID" value="CAB39936.1"/>
    <property type="molecule type" value="Genomic_DNA"/>
</dbReference>
<dbReference type="EMBL" id="AL161532">
    <property type="protein sequence ID" value="CAB78208.1"/>
    <property type="molecule type" value="Genomic_DNA"/>
</dbReference>
<dbReference type="EMBL" id="CP002687">
    <property type="protein sequence ID" value="AEE83033.1"/>
    <property type="molecule type" value="Genomic_DNA"/>
</dbReference>
<dbReference type="PIR" id="T04212">
    <property type="entry name" value="T04212"/>
</dbReference>
<dbReference type="RefSeq" id="NP_192902.1">
    <property type="nucleotide sequence ID" value="NM_117234.3"/>
</dbReference>
<dbReference type="SMR" id="P50700"/>
<dbReference type="BioGRID" id="12068">
    <property type="interactions" value="1"/>
</dbReference>
<dbReference type="FunCoup" id="P50700">
    <property type="interactions" value="37"/>
</dbReference>
<dbReference type="STRING" id="3702.P50700"/>
<dbReference type="TCDB" id="9.B.447.1.6">
    <property type="family name" value="the 1-acyl-sn-glycerol-3-phosphate acyltransferase gamma (agpat3) family"/>
</dbReference>
<dbReference type="iPTMnet" id="P50700"/>
<dbReference type="PaxDb" id="3702-AT4G11650.1"/>
<dbReference type="ProteomicsDB" id="226036"/>
<dbReference type="EnsemblPlants" id="AT4G11650.1">
    <property type="protein sequence ID" value="AT4G11650.1"/>
    <property type="gene ID" value="AT4G11650"/>
</dbReference>
<dbReference type="GeneID" id="826770"/>
<dbReference type="Gramene" id="AT4G11650.1">
    <property type="protein sequence ID" value="AT4G11650.1"/>
    <property type="gene ID" value="AT4G11650"/>
</dbReference>
<dbReference type="KEGG" id="ath:AT4G11650"/>
<dbReference type="Araport" id="AT4G11650"/>
<dbReference type="TAIR" id="AT4G11650">
    <property type="gene designation" value="OSM34"/>
</dbReference>
<dbReference type="eggNOG" id="ENOG502QV4N">
    <property type="taxonomic scope" value="Eukaryota"/>
</dbReference>
<dbReference type="HOGENOM" id="CLU_043181_5_0_1"/>
<dbReference type="InParanoid" id="P50700"/>
<dbReference type="OMA" id="NCHRILC"/>
<dbReference type="OrthoDB" id="430315at2759"/>
<dbReference type="PhylomeDB" id="P50700"/>
<dbReference type="PRO" id="PR:P50700"/>
<dbReference type="Proteomes" id="UP000006548">
    <property type="component" value="Chromosome 4"/>
</dbReference>
<dbReference type="ExpressionAtlas" id="P50700">
    <property type="expression patterns" value="baseline and differential"/>
</dbReference>
<dbReference type="GO" id="GO:0099503">
    <property type="term" value="C:secretory vesicle"/>
    <property type="evidence" value="ECO:0007005"/>
    <property type="project" value="TAIR"/>
</dbReference>
<dbReference type="GO" id="GO:0050832">
    <property type="term" value="P:defense response to fungus"/>
    <property type="evidence" value="ECO:0000314"/>
    <property type="project" value="TAIR"/>
</dbReference>
<dbReference type="FunFam" id="2.60.110.10:FF:000003">
    <property type="entry name" value="Thaumatin I"/>
    <property type="match status" value="1"/>
</dbReference>
<dbReference type="Gene3D" id="2.60.110.10">
    <property type="entry name" value="Thaumatin"/>
    <property type="match status" value="1"/>
</dbReference>
<dbReference type="InterPro" id="IPR037176">
    <property type="entry name" value="Osmotin/thaumatin-like_sf"/>
</dbReference>
<dbReference type="InterPro" id="IPR001938">
    <property type="entry name" value="Thaumatin"/>
</dbReference>
<dbReference type="InterPro" id="IPR017949">
    <property type="entry name" value="Thaumatin_CS"/>
</dbReference>
<dbReference type="PANTHER" id="PTHR31048">
    <property type="entry name" value="OS03G0233200 PROTEIN"/>
    <property type="match status" value="1"/>
</dbReference>
<dbReference type="Pfam" id="PF00314">
    <property type="entry name" value="Thaumatin"/>
    <property type="match status" value="1"/>
</dbReference>
<dbReference type="PIRSF" id="PIRSF002703">
    <property type="entry name" value="Thaumatin"/>
    <property type="match status" value="1"/>
</dbReference>
<dbReference type="PRINTS" id="PR00347">
    <property type="entry name" value="THAUMATIN"/>
</dbReference>
<dbReference type="SMART" id="SM00205">
    <property type="entry name" value="THN"/>
    <property type="match status" value="1"/>
</dbReference>
<dbReference type="SUPFAM" id="SSF49870">
    <property type="entry name" value="Osmotin, thaumatin-like protein"/>
    <property type="match status" value="1"/>
</dbReference>
<dbReference type="PROSITE" id="PS00316">
    <property type="entry name" value="THAUMATIN_1"/>
    <property type="match status" value="1"/>
</dbReference>
<dbReference type="PROSITE" id="PS51367">
    <property type="entry name" value="THAUMATIN_2"/>
    <property type="match status" value="1"/>
</dbReference>
<proteinExistence type="evidence at transcript level"/>
<comment type="similarity">
    <text evidence="2">Belongs to the thaumatin family.</text>
</comment>
<feature type="signal peptide" evidence="1">
    <location>
        <begin position="1"/>
        <end position="22"/>
    </location>
</feature>
<feature type="chain" id="PRO_0000034038" description="Osmotin-like protein OSM34">
    <location>
        <begin position="23"/>
        <end position="244"/>
    </location>
</feature>
<feature type="disulfide bond" evidence="2">
    <location>
        <begin position="31"/>
        <end position="222"/>
    </location>
</feature>
<feature type="disulfide bond" evidence="2">
    <location>
        <begin position="72"/>
        <end position="82"/>
    </location>
</feature>
<feature type="disulfide bond" evidence="2">
    <location>
        <begin position="87"/>
        <end position="93"/>
    </location>
</feature>
<feature type="disulfide bond" evidence="2">
    <location>
        <begin position="138"/>
        <end position="212"/>
    </location>
</feature>
<feature type="disulfide bond" evidence="2">
    <location>
        <begin position="143"/>
        <end position="195"/>
    </location>
</feature>
<feature type="disulfide bond" evidence="2">
    <location>
        <begin position="151"/>
        <end position="161"/>
    </location>
</feature>
<feature type="disulfide bond" evidence="2">
    <location>
        <begin position="165"/>
        <end position="174"/>
    </location>
</feature>
<feature type="disulfide bond" evidence="2">
    <location>
        <begin position="175"/>
        <end position="182"/>
    </location>
</feature>
<feature type="sequence conflict" description="In Ref. 1; CAA61411." evidence="3" ref="1">
    <original>E</original>
    <variation>V</variation>
    <location>
        <position position="186"/>
    </location>
</feature>
<keyword id="KW-1015">Disulfide bond</keyword>
<keyword id="KW-1185">Reference proteome</keyword>
<keyword id="KW-0732">Signal</keyword>
<reference key="1">
    <citation type="journal article" date="1997" name="Gene">
        <title>Isolation and characterization of a cDNA clone encoding an osmotin-like protein from Arabidopsis thaliana.</title>
        <authorList>
            <person name="Capelli N."/>
            <person name="Diogon T."/>
            <person name="Greppin H."/>
            <person name="Simon P."/>
        </authorList>
    </citation>
    <scope>NUCLEOTIDE SEQUENCE [MRNA]</scope>
    <source>
        <strain>cv. Columbia</strain>
        <tissue>Leaf</tissue>
    </source>
</reference>
<reference key="2">
    <citation type="journal article" date="1999" name="Nature">
        <title>Sequence and analysis of chromosome 4 of the plant Arabidopsis thaliana.</title>
        <authorList>
            <person name="Mayer K.F.X."/>
            <person name="Schueller C."/>
            <person name="Wambutt R."/>
            <person name="Murphy G."/>
            <person name="Volckaert G."/>
            <person name="Pohl T."/>
            <person name="Duesterhoeft A."/>
            <person name="Stiekema W."/>
            <person name="Entian K.-D."/>
            <person name="Terryn N."/>
            <person name="Harris B."/>
            <person name="Ansorge W."/>
            <person name="Brandt P."/>
            <person name="Grivell L.A."/>
            <person name="Rieger M."/>
            <person name="Weichselgartner M."/>
            <person name="de Simone V."/>
            <person name="Obermaier B."/>
            <person name="Mache R."/>
            <person name="Mueller M."/>
            <person name="Kreis M."/>
            <person name="Delseny M."/>
            <person name="Puigdomenech P."/>
            <person name="Watson M."/>
            <person name="Schmidtheini T."/>
            <person name="Reichert B."/>
            <person name="Portetelle D."/>
            <person name="Perez-Alonso M."/>
            <person name="Boutry M."/>
            <person name="Bancroft I."/>
            <person name="Vos P."/>
            <person name="Hoheisel J."/>
            <person name="Zimmermann W."/>
            <person name="Wedler H."/>
            <person name="Ridley P."/>
            <person name="Langham S.-A."/>
            <person name="McCullagh B."/>
            <person name="Bilham L."/>
            <person name="Robben J."/>
            <person name="van der Schueren J."/>
            <person name="Grymonprez B."/>
            <person name="Chuang Y.-J."/>
            <person name="Vandenbussche F."/>
            <person name="Braeken M."/>
            <person name="Weltjens I."/>
            <person name="Voet M."/>
            <person name="Bastiaens I."/>
            <person name="Aert R."/>
            <person name="Defoor E."/>
            <person name="Weitzenegger T."/>
            <person name="Bothe G."/>
            <person name="Ramsperger U."/>
            <person name="Hilbert H."/>
            <person name="Braun M."/>
            <person name="Holzer E."/>
            <person name="Brandt A."/>
            <person name="Peters S."/>
            <person name="van Staveren M."/>
            <person name="Dirkse W."/>
            <person name="Mooijman P."/>
            <person name="Klein Lankhorst R."/>
            <person name="Rose M."/>
            <person name="Hauf J."/>
            <person name="Koetter P."/>
            <person name="Berneiser S."/>
            <person name="Hempel S."/>
            <person name="Feldpausch M."/>
            <person name="Lamberth S."/>
            <person name="Van den Daele H."/>
            <person name="De Keyser A."/>
            <person name="Buysshaert C."/>
            <person name="Gielen J."/>
            <person name="Villarroel R."/>
            <person name="De Clercq R."/>
            <person name="van Montagu M."/>
            <person name="Rogers J."/>
            <person name="Cronin A."/>
            <person name="Quail M.A."/>
            <person name="Bray-Allen S."/>
            <person name="Clark L."/>
            <person name="Doggett J."/>
            <person name="Hall S."/>
            <person name="Kay M."/>
            <person name="Lennard N."/>
            <person name="McLay K."/>
            <person name="Mayes R."/>
            <person name="Pettett A."/>
            <person name="Rajandream M.A."/>
            <person name="Lyne M."/>
            <person name="Benes V."/>
            <person name="Rechmann S."/>
            <person name="Borkova D."/>
            <person name="Bloecker H."/>
            <person name="Scharfe M."/>
            <person name="Grimm M."/>
            <person name="Loehnert T.-H."/>
            <person name="Dose S."/>
            <person name="de Haan M."/>
            <person name="Maarse A.C."/>
            <person name="Schaefer M."/>
            <person name="Mueller-Auer S."/>
            <person name="Gabel C."/>
            <person name="Fuchs M."/>
            <person name="Fartmann B."/>
            <person name="Granderath K."/>
            <person name="Dauner D."/>
            <person name="Herzl A."/>
            <person name="Neumann S."/>
            <person name="Argiriou A."/>
            <person name="Vitale D."/>
            <person name="Liguori R."/>
            <person name="Piravandi E."/>
            <person name="Massenet O."/>
            <person name="Quigley F."/>
            <person name="Clabauld G."/>
            <person name="Muendlein A."/>
            <person name="Felber R."/>
            <person name="Schnabl S."/>
            <person name="Hiller R."/>
            <person name="Schmidt W."/>
            <person name="Lecharny A."/>
            <person name="Aubourg S."/>
            <person name="Chefdor F."/>
            <person name="Cooke R."/>
            <person name="Berger C."/>
            <person name="Monfort A."/>
            <person name="Casacuberta E."/>
            <person name="Gibbons T."/>
            <person name="Weber N."/>
            <person name="Vandenbol M."/>
            <person name="Bargues M."/>
            <person name="Terol J."/>
            <person name="Torres A."/>
            <person name="Perez-Perez A."/>
            <person name="Purnelle B."/>
            <person name="Bent E."/>
            <person name="Johnson S."/>
            <person name="Tacon D."/>
            <person name="Jesse T."/>
            <person name="Heijnen L."/>
            <person name="Schwarz S."/>
            <person name="Scholler P."/>
            <person name="Heber S."/>
            <person name="Francs P."/>
            <person name="Bielke C."/>
            <person name="Frishman D."/>
            <person name="Haase D."/>
            <person name="Lemcke K."/>
            <person name="Mewes H.-W."/>
            <person name="Stocker S."/>
            <person name="Zaccaria P."/>
            <person name="Bevan M."/>
            <person name="Wilson R.K."/>
            <person name="de la Bastide M."/>
            <person name="Habermann K."/>
            <person name="Parnell L."/>
            <person name="Dedhia N."/>
            <person name="Gnoj L."/>
            <person name="Schutz K."/>
            <person name="Huang E."/>
            <person name="Spiegel L."/>
            <person name="Sekhon M."/>
            <person name="Murray J."/>
            <person name="Sheet P."/>
            <person name="Cordes M."/>
            <person name="Abu-Threideh J."/>
            <person name="Stoneking T."/>
            <person name="Kalicki J."/>
            <person name="Graves T."/>
            <person name="Harmon G."/>
            <person name="Edwards J."/>
            <person name="Latreille P."/>
            <person name="Courtney L."/>
            <person name="Cloud J."/>
            <person name="Abbott A."/>
            <person name="Scott K."/>
            <person name="Johnson D."/>
            <person name="Minx P."/>
            <person name="Bentley D."/>
            <person name="Fulton B."/>
            <person name="Miller N."/>
            <person name="Greco T."/>
            <person name="Kemp K."/>
            <person name="Kramer J."/>
            <person name="Fulton L."/>
            <person name="Mardis E."/>
            <person name="Dante M."/>
            <person name="Pepin K."/>
            <person name="Hillier L.W."/>
            <person name="Nelson J."/>
            <person name="Spieth J."/>
            <person name="Ryan E."/>
            <person name="Andrews S."/>
            <person name="Geisel C."/>
            <person name="Layman D."/>
            <person name="Du H."/>
            <person name="Ali J."/>
            <person name="Berghoff A."/>
            <person name="Jones K."/>
            <person name="Drone K."/>
            <person name="Cotton M."/>
            <person name="Joshu C."/>
            <person name="Antonoiu B."/>
            <person name="Zidanic M."/>
            <person name="Strong C."/>
            <person name="Sun H."/>
            <person name="Lamar B."/>
            <person name="Yordan C."/>
            <person name="Ma P."/>
            <person name="Zhong J."/>
            <person name="Preston R."/>
            <person name="Vil D."/>
            <person name="Shekher M."/>
            <person name="Matero A."/>
            <person name="Shah R."/>
            <person name="Swaby I.K."/>
            <person name="O'Shaughnessy A."/>
            <person name="Rodriguez M."/>
            <person name="Hoffman J."/>
            <person name="Till S."/>
            <person name="Granat S."/>
            <person name="Shohdy N."/>
            <person name="Hasegawa A."/>
            <person name="Hameed A."/>
            <person name="Lodhi M."/>
            <person name="Johnson A."/>
            <person name="Chen E."/>
            <person name="Marra M.A."/>
            <person name="Martienssen R."/>
            <person name="McCombie W.R."/>
        </authorList>
    </citation>
    <scope>NUCLEOTIDE SEQUENCE [LARGE SCALE GENOMIC DNA]</scope>
    <source>
        <strain>cv. Columbia</strain>
    </source>
</reference>
<reference key="3">
    <citation type="journal article" date="2017" name="Plant J.">
        <title>Araport11: a complete reannotation of the Arabidopsis thaliana reference genome.</title>
        <authorList>
            <person name="Cheng C.Y."/>
            <person name="Krishnakumar V."/>
            <person name="Chan A.P."/>
            <person name="Thibaud-Nissen F."/>
            <person name="Schobel S."/>
            <person name="Town C.D."/>
        </authorList>
    </citation>
    <scope>GENOME REANNOTATION</scope>
    <source>
        <strain>cv. Columbia</strain>
    </source>
</reference>
<protein>
    <recommendedName>
        <fullName>Osmotin-like protein OSM34</fullName>
    </recommendedName>
</protein>
<gene>
    <name type="primary">OSM34</name>
    <name type="ordered locus">At4g11650</name>
    <name type="ORF">T5C23.80</name>
</gene>
<evidence type="ECO:0000255" key="1"/>
<evidence type="ECO:0000255" key="2">
    <source>
        <dbReference type="PROSITE-ProRule" id="PRU00699"/>
    </source>
</evidence>
<evidence type="ECO:0000305" key="3"/>
<organism>
    <name type="scientific">Arabidopsis thaliana</name>
    <name type="common">Mouse-ear cress</name>
    <dbReference type="NCBI Taxonomy" id="3702"/>
    <lineage>
        <taxon>Eukaryota</taxon>
        <taxon>Viridiplantae</taxon>
        <taxon>Streptophyta</taxon>
        <taxon>Embryophyta</taxon>
        <taxon>Tracheophyta</taxon>
        <taxon>Spermatophyta</taxon>
        <taxon>Magnoliopsida</taxon>
        <taxon>eudicotyledons</taxon>
        <taxon>Gunneridae</taxon>
        <taxon>Pentapetalae</taxon>
        <taxon>rosids</taxon>
        <taxon>malvids</taxon>
        <taxon>Brassicales</taxon>
        <taxon>Brassicaceae</taxon>
        <taxon>Camelineae</taxon>
        <taxon>Arabidopsis</taxon>
    </lineage>
</organism>
<name>OSL3_ARATH</name>
<sequence>MANLLVSTFIFSALLLISTATAATFEILNQCSYTVWAAASPGGGRRLDAGQSWRLDVAAGTKMARIWGRTNCNFDSSGRGRCQTGDCSGGLQCTGWGQPPNTLAEYALNQFNNLDFYDISLVDGFNIPMEFSPTSSNCHRILCTADINGQCPNVLRAPGGCNNPCTVFQTNQYCCTNGQGSCSDTEYSRFFKQRCPDAYSYPQDDPTSTFTCTNTNYRVVFCPRSRLGATGSHQLPIKMVTEEN</sequence>